<name>FOLD_STAAM</name>
<keyword id="KW-0028">Amino-acid biosynthesis</keyword>
<keyword id="KW-0368">Histidine biosynthesis</keyword>
<keyword id="KW-0378">Hydrolase</keyword>
<keyword id="KW-0486">Methionine biosynthesis</keyword>
<keyword id="KW-0511">Multifunctional enzyme</keyword>
<keyword id="KW-0521">NADP</keyword>
<keyword id="KW-0554">One-carbon metabolism</keyword>
<keyword id="KW-0560">Oxidoreductase</keyword>
<keyword id="KW-0658">Purine biosynthesis</keyword>
<comment type="function">
    <text evidence="1">Catalyzes the oxidation of 5,10-methylenetetrahydrofolate to 5,10-methenyltetrahydrofolate and then the hydrolysis of 5,10-methenyltetrahydrofolate to 10-formyltetrahydrofolate.</text>
</comment>
<comment type="catalytic activity">
    <reaction evidence="1">
        <text>(6R)-5,10-methylene-5,6,7,8-tetrahydrofolate + NADP(+) = (6R)-5,10-methenyltetrahydrofolate + NADPH</text>
        <dbReference type="Rhea" id="RHEA:22812"/>
        <dbReference type="ChEBI" id="CHEBI:15636"/>
        <dbReference type="ChEBI" id="CHEBI:57455"/>
        <dbReference type="ChEBI" id="CHEBI:57783"/>
        <dbReference type="ChEBI" id="CHEBI:58349"/>
        <dbReference type="EC" id="1.5.1.5"/>
    </reaction>
</comment>
<comment type="catalytic activity">
    <reaction evidence="1">
        <text>(6R)-5,10-methenyltetrahydrofolate + H2O = (6R)-10-formyltetrahydrofolate + H(+)</text>
        <dbReference type="Rhea" id="RHEA:23700"/>
        <dbReference type="ChEBI" id="CHEBI:15377"/>
        <dbReference type="ChEBI" id="CHEBI:15378"/>
        <dbReference type="ChEBI" id="CHEBI:57455"/>
        <dbReference type="ChEBI" id="CHEBI:195366"/>
        <dbReference type="EC" id="3.5.4.9"/>
    </reaction>
</comment>
<comment type="pathway">
    <text evidence="1">One-carbon metabolism; tetrahydrofolate interconversion.</text>
</comment>
<comment type="subunit">
    <text evidence="1">Homodimer.</text>
</comment>
<comment type="similarity">
    <text evidence="1">Belongs to the tetrahydrofolate dehydrogenase/cyclohydrolase family.</text>
</comment>
<accession>Q99V34</accession>
<evidence type="ECO:0000255" key="1">
    <source>
        <dbReference type="HAMAP-Rule" id="MF_01576"/>
    </source>
</evidence>
<reference key="1">
    <citation type="journal article" date="2001" name="Lancet">
        <title>Whole genome sequencing of meticillin-resistant Staphylococcus aureus.</title>
        <authorList>
            <person name="Kuroda M."/>
            <person name="Ohta T."/>
            <person name="Uchiyama I."/>
            <person name="Baba T."/>
            <person name="Yuzawa H."/>
            <person name="Kobayashi I."/>
            <person name="Cui L."/>
            <person name="Oguchi A."/>
            <person name="Aoki K."/>
            <person name="Nagai Y."/>
            <person name="Lian J.-Q."/>
            <person name="Ito T."/>
            <person name="Kanamori M."/>
            <person name="Matsumaru H."/>
            <person name="Maruyama A."/>
            <person name="Murakami H."/>
            <person name="Hosoyama A."/>
            <person name="Mizutani-Ui Y."/>
            <person name="Takahashi N.K."/>
            <person name="Sawano T."/>
            <person name="Inoue R."/>
            <person name="Kaito C."/>
            <person name="Sekimizu K."/>
            <person name="Hirakawa H."/>
            <person name="Kuhara S."/>
            <person name="Goto S."/>
            <person name="Yabuzaki J."/>
            <person name="Kanehisa M."/>
            <person name="Yamashita A."/>
            <person name="Oshima K."/>
            <person name="Furuya K."/>
            <person name="Yoshino C."/>
            <person name="Shiba T."/>
            <person name="Hattori M."/>
            <person name="Ogasawara N."/>
            <person name="Hayashi H."/>
            <person name="Hiramatsu K."/>
        </authorList>
    </citation>
    <scope>NUCLEOTIDE SEQUENCE [LARGE SCALE GENOMIC DNA]</scope>
    <source>
        <strain>Mu50 / ATCC 700699</strain>
    </source>
</reference>
<dbReference type="EC" id="1.5.1.5" evidence="1"/>
<dbReference type="EC" id="3.5.4.9" evidence="1"/>
<dbReference type="EMBL" id="BA000017">
    <property type="protein sequence ID" value="BAB57225.1"/>
    <property type="molecule type" value="Genomic_DNA"/>
</dbReference>
<dbReference type="RefSeq" id="WP_000225836.1">
    <property type="nucleotide sequence ID" value="NC_002758.2"/>
</dbReference>
<dbReference type="SMR" id="Q99V34"/>
<dbReference type="KEGG" id="sav:SAV1063"/>
<dbReference type="HOGENOM" id="CLU_034045_2_1_9"/>
<dbReference type="PhylomeDB" id="Q99V34"/>
<dbReference type="UniPathway" id="UPA00193"/>
<dbReference type="Proteomes" id="UP000002481">
    <property type="component" value="Chromosome"/>
</dbReference>
<dbReference type="GO" id="GO:0005829">
    <property type="term" value="C:cytosol"/>
    <property type="evidence" value="ECO:0007669"/>
    <property type="project" value="TreeGrafter"/>
</dbReference>
<dbReference type="GO" id="GO:0004477">
    <property type="term" value="F:methenyltetrahydrofolate cyclohydrolase activity"/>
    <property type="evidence" value="ECO:0007669"/>
    <property type="project" value="UniProtKB-UniRule"/>
</dbReference>
<dbReference type="GO" id="GO:0004488">
    <property type="term" value="F:methylenetetrahydrofolate dehydrogenase (NADP+) activity"/>
    <property type="evidence" value="ECO:0007669"/>
    <property type="project" value="UniProtKB-UniRule"/>
</dbReference>
<dbReference type="GO" id="GO:0000105">
    <property type="term" value="P:L-histidine biosynthetic process"/>
    <property type="evidence" value="ECO:0007669"/>
    <property type="project" value="UniProtKB-KW"/>
</dbReference>
<dbReference type="GO" id="GO:0009086">
    <property type="term" value="P:methionine biosynthetic process"/>
    <property type="evidence" value="ECO:0007669"/>
    <property type="project" value="UniProtKB-KW"/>
</dbReference>
<dbReference type="GO" id="GO:0006164">
    <property type="term" value="P:purine nucleotide biosynthetic process"/>
    <property type="evidence" value="ECO:0007669"/>
    <property type="project" value="UniProtKB-KW"/>
</dbReference>
<dbReference type="GO" id="GO:0035999">
    <property type="term" value="P:tetrahydrofolate interconversion"/>
    <property type="evidence" value="ECO:0007669"/>
    <property type="project" value="UniProtKB-UniRule"/>
</dbReference>
<dbReference type="CDD" id="cd01080">
    <property type="entry name" value="NAD_bind_m-THF_DH_Cyclohyd"/>
    <property type="match status" value="1"/>
</dbReference>
<dbReference type="FunFam" id="3.40.50.10860:FF:000001">
    <property type="entry name" value="Bifunctional protein FolD"/>
    <property type="match status" value="1"/>
</dbReference>
<dbReference type="FunFam" id="3.40.50.720:FF:000094">
    <property type="entry name" value="Bifunctional protein FolD"/>
    <property type="match status" value="1"/>
</dbReference>
<dbReference type="Gene3D" id="3.40.50.10860">
    <property type="entry name" value="Leucine Dehydrogenase, chain A, domain 1"/>
    <property type="match status" value="1"/>
</dbReference>
<dbReference type="Gene3D" id="3.40.50.720">
    <property type="entry name" value="NAD(P)-binding Rossmann-like Domain"/>
    <property type="match status" value="1"/>
</dbReference>
<dbReference type="HAMAP" id="MF_01576">
    <property type="entry name" value="THF_DHG_CYH"/>
    <property type="match status" value="1"/>
</dbReference>
<dbReference type="InterPro" id="IPR046346">
    <property type="entry name" value="Aminoacid_DH-like_N_sf"/>
</dbReference>
<dbReference type="InterPro" id="IPR036291">
    <property type="entry name" value="NAD(P)-bd_dom_sf"/>
</dbReference>
<dbReference type="InterPro" id="IPR000672">
    <property type="entry name" value="THF_DH/CycHdrlase"/>
</dbReference>
<dbReference type="InterPro" id="IPR020630">
    <property type="entry name" value="THF_DH/CycHdrlase_cat_dom"/>
</dbReference>
<dbReference type="InterPro" id="IPR020631">
    <property type="entry name" value="THF_DH/CycHdrlase_NAD-bd_dom"/>
</dbReference>
<dbReference type="NCBIfam" id="NF010772">
    <property type="entry name" value="PRK14175.1"/>
    <property type="match status" value="1"/>
</dbReference>
<dbReference type="PANTHER" id="PTHR48099:SF5">
    <property type="entry name" value="C-1-TETRAHYDROFOLATE SYNTHASE, CYTOPLASMIC"/>
    <property type="match status" value="1"/>
</dbReference>
<dbReference type="PANTHER" id="PTHR48099">
    <property type="entry name" value="C-1-TETRAHYDROFOLATE SYNTHASE, CYTOPLASMIC-RELATED"/>
    <property type="match status" value="1"/>
</dbReference>
<dbReference type="Pfam" id="PF00763">
    <property type="entry name" value="THF_DHG_CYH"/>
    <property type="match status" value="1"/>
</dbReference>
<dbReference type="Pfam" id="PF02882">
    <property type="entry name" value="THF_DHG_CYH_C"/>
    <property type="match status" value="1"/>
</dbReference>
<dbReference type="PRINTS" id="PR00085">
    <property type="entry name" value="THFDHDRGNASE"/>
</dbReference>
<dbReference type="SUPFAM" id="SSF53223">
    <property type="entry name" value="Aminoacid dehydrogenase-like, N-terminal domain"/>
    <property type="match status" value="1"/>
</dbReference>
<dbReference type="SUPFAM" id="SSF51735">
    <property type="entry name" value="NAD(P)-binding Rossmann-fold domains"/>
    <property type="match status" value="1"/>
</dbReference>
<organism>
    <name type="scientific">Staphylococcus aureus (strain Mu50 / ATCC 700699)</name>
    <dbReference type="NCBI Taxonomy" id="158878"/>
    <lineage>
        <taxon>Bacteria</taxon>
        <taxon>Bacillati</taxon>
        <taxon>Bacillota</taxon>
        <taxon>Bacilli</taxon>
        <taxon>Bacillales</taxon>
        <taxon>Staphylococcaceae</taxon>
        <taxon>Staphylococcus</taxon>
    </lineage>
</organism>
<sequence>MVAKILDGKQIAKDYRQGLQDQVEALKEKGFTPKLSVILVGNDGASQSYVRSKKKAAEKIGMISEIVHLEETATEEEVLNELNRLNNDDSVSGILVQVPLPKQVSEQKILEAINPEKDVDGFHPINIGKLYIDEQTFVPCTPLGIMEILKHADIDLEAKNAVVIGRSHIVGQPVSKLLLQKNASVTILHSRSKDMASYLKDADVIVSAVGKPSLVTKDVVKEGAVIIDVGNTPDENGKLKGDVDYDAVKEIAGAITPVPGGVGPLTITMVLNNTLLAEKMRRGIDS</sequence>
<gene>
    <name evidence="1" type="primary">folD</name>
    <name type="ordered locus">SAV1063</name>
</gene>
<proteinExistence type="inferred from homology"/>
<protein>
    <recommendedName>
        <fullName evidence="1">Bifunctional protein FolD</fullName>
    </recommendedName>
    <domain>
        <recommendedName>
            <fullName evidence="1">Methylenetetrahydrofolate dehydrogenase</fullName>
            <ecNumber evidence="1">1.5.1.5</ecNumber>
        </recommendedName>
    </domain>
    <domain>
        <recommendedName>
            <fullName evidence="1">Methenyltetrahydrofolate cyclohydrolase</fullName>
            <ecNumber evidence="1">3.5.4.9</ecNumber>
        </recommendedName>
    </domain>
</protein>
<feature type="chain" id="PRO_0000265946" description="Bifunctional protein FolD">
    <location>
        <begin position="1"/>
        <end position="286"/>
    </location>
</feature>
<feature type="binding site" evidence="1">
    <location>
        <begin position="165"/>
        <end position="167"/>
    </location>
    <ligand>
        <name>NADP(+)</name>
        <dbReference type="ChEBI" id="CHEBI:58349"/>
    </ligand>
</feature>
<feature type="binding site" evidence="1">
    <location>
        <position position="190"/>
    </location>
    <ligand>
        <name>NADP(+)</name>
        <dbReference type="ChEBI" id="CHEBI:58349"/>
    </ligand>
</feature>